<proteinExistence type="inferred from homology"/>
<feature type="chain" id="PRO_0000331836" description="Methionine--tRNA ligase">
    <location>
        <begin position="1"/>
        <end position="681"/>
    </location>
</feature>
<feature type="domain" description="tRNA-binding" evidence="1">
    <location>
        <begin position="580"/>
        <end position="681"/>
    </location>
</feature>
<feature type="region of interest" description="Disordered" evidence="2">
    <location>
        <begin position="547"/>
        <end position="569"/>
    </location>
</feature>
<feature type="short sequence motif" description="'HIGH' region">
    <location>
        <begin position="15"/>
        <end position="25"/>
    </location>
</feature>
<feature type="short sequence motif" description="'KMSKS' region">
    <location>
        <begin position="332"/>
        <end position="336"/>
    </location>
</feature>
<feature type="compositionally biased region" description="Basic and acidic residues" evidence="2">
    <location>
        <begin position="555"/>
        <end position="569"/>
    </location>
</feature>
<feature type="binding site" evidence="1">
    <location>
        <position position="146"/>
    </location>
    <ligand>
        <name>Zn(2+)</name>
        <dbReference type="ChEBI" id="CHEBI:29105"/>
    </ligand>
</feature>
<feature type="binding site" evidence="1">
    <location>
        <position position="149"/>
    </location>
    <ligand>
        <name>Zn(2+)</name>
        <dbReference type="ChEBI" id="CHEBI:29105"/>
    </ligand>
</feature>
<feature type="binding site" evidence="1">
    <location>
        <position position="159"/>
    </location>
    <ligand>
        <name>Zn(2+)</name>
        <dbReference type="ChEBI" id="CHEBI:29105"/>
    </ligand>
</feature>
<feature type="binding site" evidence="1">
    <location>
        <position position="162"/>
    </location>
    <ligand>
        <name>Zn(2+)</name>
        <dbReference type="ChEBI" id="CHEBI:29105"/>
    </ligand>
</feature>
<feature type="binding site" evidence="1">
    <location>
        <position position="335"/>
    </location>
    <ligand>
        <name>ATP</name>
        <dbReference type="ChEBI" id="CHEBI:30616"/>
    </ligand>
</feature>
<sequence>MSGEPRKILVTSALPYANGPIHLGHLLEYIQTDIWVRFQKLRGHQCTYVCADDAHGTAIMLKAEQMGITPEQLIDQVNADHRRDFAEFLIEFDNYYSTHSEENRELSSYIYKACLDAGKIATRTITQAYDPEKNLFLADRFIKGTCPKCKAEDQYGDNCEVCSSTYTPAELINPRSAISGATPIEKESTHFFFKLPDFQEFLQKWTRSGTLQPQIANKLAEWLDAGLQEWDISRDAPYFGFEIPDQPGKFFYVWLDAPIGYMASFKNLCARRADLDFDEYWKKDSTAELYHFIGKDIINFHALFWPSMLSCADFRTPSAVYAHGFVTVDGAKMSKSRGTFIMARTYLEHLNPEYLRYYFAAKLTSNVDDLDLNLQDFTLKVNADLVGKLVNIASRCAKFITKAGGKLSPQISEPELIEQFLSKSDFIAQAYEDREFGKAVREIMALADLANKYIDEKAPWKLAKEEGKEQEVLDVCSVGVNLFRILITYLAPVLPGVAAASAEFLNAPIVWNRPLEPLTDHAVNEFKPMISRVDPKAVDAMVDASKDNMAQAPKDNGKAKKDKKEAKSEEEIAPTIKFDDFAKIDLRIAKIVSAEHVEGADKLLRLQLDIGSEQRQVFAGIKSAYAPEDLVGRLTVMVANLEPRKMKFGMSEGMVLAAGPGGKDIWLLQPDSGAQPGMQVK</sequence>
<comment type="function">
    <text evidence="1">Is required not only for elongation of protein synthesis but also for the initiation of all mRNA translation through initiator tRNA(fMet) aminoacylation.</text>
</comment>
<comment type="catalytic activity">
    <reaction evidence="1">
        <text>tRNA(Met) + L-methionine + ATP = L-methionyl-tRNA(Met) + AMP + diphosphate</text>
        <dbReference type="Rhea" id="RHEA:13481"/>
        <dbReference type="Rhea" id="RHEA-COMP:9667"/>
        <dbReference type="Rhea" id="RHEA-COMP:9698"/>
        <dbReference type="ChEBI" id="CHEBI:30616"/>
        <dbReference type="ChEBI" id="CHEBI:33019"/>
        <dbReference type="ChEBI" id="CHEBI:57844"/>
        <dbReference type="ChEBI" id="CHEBI:78442"/>
        <dbReference type="ChEBI" id="CHEBI:78530"/>
        <dbReference type="ChEBI" id="CHEBI:456215"/>
        <dbReference type="EC" id="6.1.1.10"/>
    </reaction>
</comment>
<comment type="cofactor">
    <cofactor evidence="1">
        <name>Zn(2+)</name>
        <dbReference type="ChEBI" id="CHEBI:29105"/>
    </cofactor>
    <text evidence="1">Binds 1 zinc ion per subunit.</text>
</comment>
<comment type="subunit">
    <text evidence="1">Homodimer.</text>
</comment>
<comment type="subcellular location">
    <subcellularLocation>
        <location evidence="1">Cytoplasm</location>
    </subcellularLocation>
</comment>
<comment type="similarity">
    <text evidence="1">Belongs to the class-I aminoacyl-tRNA synthetase family. MetG type 1 subfamily.</text>
</comment>
<organism>
    <name type="scientific">Hahella chejuensis (strain KCTC 2396)</name>
    <dbReference type="NCBI Taxonomy" id="349521"/>
    <lineage>
        <taxon>Bacteria</taxon>
        <taxon>Pseudomonadati</taxon>
        <taxon>Pseudomonadota</taxon>
        <taxon>Gammaproteobacteria</taxon>
        <taxon>Oceanospirillales</taxon>
        <taxon>Hahellaceae</taxon>
        <taxon>Hahella</taxon>
    </lineage>
</organism>
<accession>Q2SKU2</accession>
<protein>
    <recommendedName>
        <fullName evidence="1">Methionine--tRNA ligase</fullName>
        <ecNumber evidence="1">6.1.1.10</ecNumber>
    </recommendedName>
    <alternativeName>
        <fullName evidence="1">Methionyl-tRNA synthetase</fullName>
        <shortName evidence="1">MetRS</shortName>
    </alternativeName>
</protein>
<name>SYM_HAHCH</name>
<gene>
    <name evidence="1" type="primary">metG</name>
    <name type="ordered locus">HCH_01897</name>
</gene>
<dbReference type="EC" id="6.1.1.10" evidence="1"/>
<dbReference type="EMBL" id="CP000155">
    <property type="protein sequence ID" value="ABC28732.1"/>
    <property type="molecule type" value="Genomic_DNA"/>
</dbReference>
<dbReference type="RefSeq" id="WP_011395803.1">
    <property type="nucleotide sequence ID" value="NC_007645.1"/>
</dbReference>
<dbReference type="SMR" id="Q2SKU2"/>
<dbReference type="STRING" id="349521.HCH_01897"/>
<dbReference type="KEGG" id="hch:HCH_01897"/>
<dbReference type="eggNOG" id="COG0073">
    <property type="taxonomic scope" value="Bacteria"/>
</dbReference>
<dbReference type="eggNOG" id="COG0143">
    <property type="taxonomic scope" value="Bacteria"/>
</dbReference>
<dbReference type="HOGENOM" id="CLU_009710_7_0_6"/>
<dbReference type="Proteomes" id="UP000000238">
    <property type="component" value="Chromosome"/>
</dbReference>
<dbReference type="GO" id="GO:0005829">
    <property type="term" value="C:cytosol"/>
    <property type="evidence" value="ECO:0007669"/>
    <property type="project" value="TreeGrafter"/>
</dbReference>
<dbReference type="GO" id="GO:0005524">
    <property type="term" value="F:ATP binding"/>
    <property type="evidence" value="ECO:0007669"/>
    <property type="project" value="UniProtKB-UniRule"/>
</dbReference>
<dbReference type="GO" id="GO:0046872">
    <property type="term" value="F:metal ion binding"/>
    <property type="evidence" value="ECO:0007669"/>
    <property type="project" value="UniProtKB-KW"/>
</dbReference>
<dbReference type="GO" id="GO:0004825">
    <property type="term" value="F:methionine-tRNA ligase activity"/>
    <property type="evidence" value="ECO:0007669"/>
    <property type="project" value="UniProtKB-UniRule"/>
</dbReference>
<dbReference type="GO" id="GO:0000049">
    <property type="term" value="F:tRNA binding"/>
    <property type="evidence" value="ECO:0007669"/>
    <property type="project" value="UniProtKB-KW"/>
</dbReference>
<dbReference type="GO" id="GO:0006431">
    <property type="term" value="P:methionyl-tRNA aminoacylation"/>
    <property type="evidence" value="ECO:0007669"/>
    <property type="project" value="UniProtKB-UniRule"/>
</dbReference>
<dbReference type="CDD" id="cd07957">
    <property type="entry name" value="Anticodon_Ia_Met"/>
    <property type="match status" value="1"/>
</dbReference>
<dbReference type="CDD" id="cd00814">
    <property type="entry name" value="MetRS_core"/>
    <property type="match status" value="1"/>
</dbReference>
<dbReference type="CDD" id="cd02800">
    <property type="entry name" value="tRNA_bind_EcMetRS_like"/>
    <property type="match status" value="1"/>
</dbReference>
<dbReference type="FunFam" id="1.10.730.10:FF:000005">
    <property type="entry name" value="Methionine--tRNA ligase"/>
    <property type="match status" value="1"/>
</dbReference>
<dbReference type="FunFam" id="2.20.28.20:FF:000001">
    <property type="entry name" value="Methionine--tRNA ligase"/>
    <property type="match status" value="1"/>
</dbReference>
<dbReference type="FunFam" id="2.40.50.140:FF:000042">
    <property type="entry name" value="Methionine--tRNA ligase"/>
    <property type="match status" value="1"/>
</dbReference>
<dbReference type="Gene3D" id="3.40.50.620">
    <property type="entry name" value="HUPs"/>
    <property type="match status" value="1"/>
</dbReference>
<dbReference type="Gene3D" id="1.10.730.10">
    <property type="entry name" value="Isoleucyl-tRNA Synthetase, Domain 1"/>
    <property type="match status" value="1"/>
</dbReference>
<dbReference type="Gene3D" id="2.20.28.20">
    <property type="entry name" value="Methionyl-tRNA synthetase, Zn-domain"/>
    <property type="match status" value="1"/>
</dbReference>
<dbReference type="Gene3D" id="2.40.50.140">
    <property type="entry name" value="Nucleic acid-binding proteins"/>
    <property type="match status" value="1"/>
</dbReference>
<dbReference type="HAMAP" id="MF_00098">
    <property type="entry name" value="Met_tRNA_synth_type1"/>
    <property type="match status" value="1"/>
</dbReference>
<dbReference type="InterPro" id="IPR001412">
    <property type="entry name" value="aa-tRNA-synth_I_CS"/>
</dbReference>
<dbReference type="InterPro" id="IPR041872">
    <property type="entry name" value="Anticodon_Met"/>
</dbReference>
<dbReference type="InterPro" id="IPR004495">
    <property type="entry name" value="Met-tRNA-synth_bsu_C"/>
</dbReference>
<dbReference type="InterPro" id="IPR023458">
    <property type="entry name" value="Met-tRNA_ligase_1"/>
</dbReference>
<dbReference type="InterPro" id="IPR014758">
    <property type="entry name" value="Met-tRNA_synth"/>
</dbReference>
<dbReference type="InterPro" id="IPR015413">
    <property type="entry name" value="Methionyl/Leucyl_tRNA_Synth"/>
</dbReference>
<dbReference type="InterPro" id="IPR033911">
    <property type="entry name" value="MetRS_core"/>
</dbReference>
<dbReference type="InterPro" id="IPR029038">
    <property type="entry name" value="MetRS_Zn"/>
</dbReference>
<dbReference type="InterPro" id="IPR012340">
    <property type="entry name" value="NA-bd_OB-fold"/>
</dbReference>
<dbReference type="InterPro" id="IPR014729">
    <property type="entry name" value="Rossmann-like_a/b/a_fold"/>
</dbReference>
<dbReference type="InterPro" id="IPR002547">
    <property type="entry name" value="tRNA-bd_dom"/>
</dbReference>
<dbReference type="InterPro" id="IPR009080">
    <property type="entry name" value="tRNAsynth_Ia_anticodon-bd"/>
</dbReference>
<dbReference type="NCBIfam" id="TIGR00398">
    <property type="entry name" value="metG"/>
    <property type="match status" value="1"/>
</dbReference>
<dbReference type="NCBIfam" id="TIGR00399">
    <property type="entry name" value="metG_C_term"/>
    <property type="match status" value="1"/>
</dbReference>
<dbReference type="NCBIfam" id="NF001100">
    <property type="entry name" value="PRK00133.1"/>
    <property type="match status" value="1"/>
</dbReference>
<dbReference type="PANTHER" id="PTHR45765">
    <property type="entry name" value="METHIONINE--TRNA LIGASE"/>
    <property type="match status" value="1"/>
</dbReference>
<dbReference type="PANTHER" id="PTHR45765:SF1">
    <property type="entry name" value="METHIONINE--TRNA LIGASE, CYTOPLASMIC"/>
    <property type="match status" value="1"/>
</dbReference>
<dbReference type="Pfam" id="PF19303">
    <property type="entry name" value="Anticodon_3"/>
    <property type="match status" value="1"/>
</dbReference>
<dbReference type="Pfam" id="PF09334">
    <property type="entry name" value="tRNA-synt_1g"/>
    <property type="match status" value="1"/>
</dbReference>
<dbReference type="Pfam" id="PF01588">
    <property type="entry name" value="tRNA_bind"/>
    <property type="match status" value="1"/>
</dbReference>
<dbReference type="PRINTS" id="PR01041">
    <property type="entry name" value="TRNASYNTHMET"/>
</dbReference>
<dbReference type="SUPFAM" id="SSF47323">
    <property type="entry name" value="Anticodon-binding domain of a subclass of class I aminoacyl-tRNA synthetases"/>
    <property type="match status" value="1"/>
</dbReference>
<dbReference type="SUPFAM" id="SSF57770">
    <property type="entry name" value="Methionyl-tRNA synthetase (MetRS), Zn-domain"/>
    <property type="match status" value="1"/>
</dbReference>
<dbReference type="SUPFAM" id="SSF50249">
    <property type="entry name" value="Nucleic acid-binding proteins"/>
    <property type="match status" value="1"/>
</dbReference>
<dbReference type="SUPFAM" id="SSF52374">
    <property type="entry name" value="Nucleotidylyl transferase"/>
    <property type="match status" value="1"/>
</dbReference>
<dbReference type="PROSITE" id="PS00178">
    <property type="entry name" value="AA_TRNA_LIGASE_I"/>
    <property type="match status" value="1"/>
</dbReference>
<dbReference type="PROSITE" id="PS50886">
    <property type="entry name" value="TRBD"/>
    <property type="match status" value="1"/>
</dbReference>
<reference key="1">
    <citation type="journal article" date="2005" name="Nucleic Acids Res.">
        <title>Genomic blueprint of Hahella chejuensis, a marine microbe producing an algicidal agent.</title>
        <authorList>
            <person name="Jeong H."/>
            <person name="Yim J.H."/>
            <person name="Lee C."/>
            <person name="Choi S.-H."/>
            <person name="Park Y.K."/>
            <person name="Yoon S.H."/>
            <person name="Hur C.-G."/>
            <person name="Kang H.-Y."/>
            <person name="Kim D."/>
            <person name="Lee H.H."/>
            <person name="Park K.H."/>
            <person name="Park S.-H."/>
            <person name="Park H.-S."/>
            <person name="Lee H.K."/>
            <person name="Oh T.K."/>
            <person name="Kim J.F."/>
        </authorList>
    </citation>
    <scope>NUCLEOTIDE SEQUENCE [LARGE SCALE GENOMIC DNA]</scope>
    <source>
        <strain>KCTC 2396</strain>
    </source>
</reference>
<evidence type="ECO:0000255" key="1">
    <source>
        <dbReference type="HAMAP-Rule" id="MF_00098"/>
    </source>
</evidence>
<evidence type="ECO:0000256" key="2">
    <source>
        <dbReference type="SAM" id="MobiDB-lite"/>
    </source>
</evidence>
<keyword id="KW-0030">Aminoacyl-tRNA synthetase</keyword>
<keyword id="KW-0067">ATP-binding</keyword>
<keyword id="KW-0963">Cytoplasm</keyword>
<keyword id="KW-0436">Ligase</keyword>
<keyword id="KW-0479">Metal-binding</keyword>
<keyword id="KW-0547">Nucleotide-binding</keyword>
<keyword id="KW-0648">Protein biosynthesis</keyword>
<keyword id="KW-1185">Reference proteome</keyword>
<keyword id="KW-0694">RNA-binding</keyword>
<keyword id="KW-0820">tRNA-binding</keyword>
<keyword id="KW-0862">Zinc</keyword>